<dbReference type="EMBL" id="BC083587">
    <property type="protein sequence ID" value="AAH83587.1"/>
    <property type="molecule type" value="mRNA"/>
</dbReference>
<dbReference type="RefSeq" id="NP_001014230.1">
    <property type="nucleotide sequence ID" value="NM_001014208.1"/>
</dbReference>
<dbReference type="SMR" id="Q5XIT3"/>
<dbReference type="FunCoup" id="Q5XIT3">
    <property type="interactions" value="2515"/>
</dbReference>
<dbReference type="STRING" id="10116.ENSRNOP00000012138"/>
<dbReference type="PhosphoSitePlus" id="Q5XIT3"/>
<dbReference type="PaxDb" id="10116-ENSRNOP00000012138"/>
<dbReference type="Ensembl" id="ENSRNOT00000012138.6">
    <property type="protein sequence ID" value="ENSRNOP00000012138.5"/>
    <property type="gene ID" value="ENSRNOG00000022043.5"/>
</dbReference>
<dbReference type="GeneID" id="363027"/>
<dbReference type="KEGG" id="rno:363027"/>
<dbReference type="UCSC" id="RGD:1307512">
    <property type="organism name" value="rat"/>
</dbReference>
<dbReference type="AGR" id="RGD:1307512"/>
<dbReference type="CTD" id="78992"/>
<dbReference type="RGD" id="1307512">
    <property type="gene designation" value="Yipf2"/>
</dbReference>
<dbReference type="eggNOG" id="KOG3114">
    <property type="taxonomic scope" value="Eukaryota"/>
</dbReference>
<dbReference type="GeneTree" id="ENSGT00390000010157"/>
<dbReference type="HOGENOM" id="CLU_059606_1_1_1"/>
<dbReference type="InParanoid" id="Q5XIT3"/>
<dbReference type="OrthoDB" id="83864at9989"/>
<dbReference type="PhylomeDB" id="Q5XIT3"/>
<dbReference type="TreeFam" id="TF313536"/>
<dbReference type="PRO" id="PR:Q5XIT3"/>
<dbReference type="Proteomes" id="UP000002494">
    <property type="component" value="Chromosome 8"/>
</dbReference>
<dbReference type="Bgee" id="ENSRNOG00000022043">
    <property type="expression patterns" value="Expressed in pancreas and 18 other cell types or tissues"/>
</dbReference>
<dbReference type="GO" id="GO:0005794">
    <property type="term" value="C:Golgi apparatus"/>
    <property type="evidence" value="ECO:0000318"/>
    <property type="project" value="GO_Central"/>
</dbReference>
<dbReference type="GO" id="GO:0005797">
    <property type="term" value="C:Golgi medial cisterna"/>
    <property type="evidence" value="ECO:0000250"/>
    <property type="project" value="UniProtKB"/>
</dbReference>
<dbReference type="GO" id="GO:0000138">
    <property type="term" value="C:Golgi trans cisterna"/>
    <property type="evidence" value="ECO:0000250"/>
    <property type="project" value="UniProtKB"/>
</dbReference>
<dbReference type="GO" id="GO:0031902">
    <property type="term" value="C:late endosome membrane"/>
    <property type="evidence" value="ECO:0007669"/>
    <property type="project" value="UniProtKB-SubCell"/>
</dbReference>
<dbReference type="GO" id="GO:0005802">
    <property type="term" value="C:trans-Golgi network"/>
    <property type="evidence" value="ECO:0000250"/>
    <property type="project" value="UniProtKB"/>
</dbReference>
<dbReference type="GO" id="GO:0030133">
    <property type="term" value="C:transport vesicle"/>
    <property type="evidence" value="ECO:0007669"/>
    <property type="project" value="Ensembl"/>
</dbReference>
<dbReference type="GO" id="GO:0031267">
    <property type="term" value="F:small GTPase binding"/>
    <property type="evidence" value="ECO:0007669"/>
    <property type="project" value="InterPro"/>
</dbReference>
<dbReference type="GO" id="GO:0016192">
    <property type="term" value="P:vesicle-mediated transport"/>
    <property type="evidence" value="ECO:0007669"/>
    <property type="project" value="InterPro"/>
</dbReference>
<dbReference type="InterPro" id="IPR006977">
    <property type="entry name" value="Yip1_dom"/>
</dbReference>
<dbReference type="InterPro" id="IPR039765">
    <property type="entry name" value="Yip5/YIPF1/YIPF2"/>
</dbReference>
<dbReference type="PANTHER" id="PTHR12822">
    <property type="entry name" value="PROTEIN YIPF"/>
    <property type="match status" value="1"/>
</dbReference>
<dbReference type="PANTHER" id="PTHR12822:SF3">
    <property type="entry name" value="PROTEIN YIPF2"/>
    <property type="match status" value="1"/>
</dbReference>
<dbReference type="Pfam" id="PF04893">
    <property type="entry name" value="Yip1"/>
    <property type="match status" value="1"/>
</dbReference>
<keyword id="KW-0007">Acetylation</keyword>
<keyword id="KW-0967">Endosome</keyword>
<keyword id="KW-0333">Golgi apparatus</keyword>
<keyword id="KW-0472">Membrane</keyword>
<keyword id="KW-1185">Reference proteome</keyword>
<keyword id="KW-0812">Transmembrane</keyword>
<keyword id="KW-1133">Transmembrane helix</keyword>
<reference key="1">
    <citation type="journal article" date="2004" name="Genome Res.">
        <title>The status, quality, and expansion of the NIH full-length cDNA project: the Mammalian Gene Collection (MGC).</title>
        <authorList>
            <consortium name="The MGC Project Team"/>
        </authorList>
    </citation>
    <scope>NUCLEOTIDE SEQUENCE [LARGE SCALE MRNA]</scope>
    <source>
        <tissue>Testis</tissue>
    </source>
</reference>
<proteinExistence type="evidence at transcript level"/>
<accession>Q5XIT3</accession>
<feature type="initiator methionine" description="Removed" evidence="1">
    <location>
        <position position="1"/>
    </location>
</feature>
<feature type="chain" id="PRO_0000241456" description="Protein YIPF2">
    <location>
        <begin position="2"/>
        <end position="311"/>
    </location>
</feature>
<feature type="topological domain" description="Cytoplasmic" evidence="1">
    <location>
        <begin position="2"/>
        <end position="120"/>
    </location>
</feature>
<feature type="transmembrane region" description="Helical" evidence="2">
    <location>
        <begin position="121"/>
        <end position="141"/>
    </location>
</feature>
<feature type="topological domain" description="Lumenal" evidence="3">
    <location>
        <begin position="142"/>
        <end position="159"/>
    </location>
</feature>
<feature type="transmembrane region" description="Helical" evidence="2">
    <location>
        <begin position="160"/>
        <end position="180"/>
    </location>
</feature>
<feature type="topological domain" description="Cytoplasmic" evidence="3">
    <location>
        <begin position="181"/>
        <end position="198"/>
    </location>
</feature>
<feature type="transmembrane region" description="Helical" evidence="2">
    <location>
        <begin position="199"/>
        <end position="219"/>
    </location>
</feature>
<feature type="topological domain" description="Lumenal" evidence="3">
    <location>
        <begin position="220"/>
        <end position="226"/>
    </location>
</feature>
<feature type="transmembrane region" description="Helical" evidence="2">
    <location>
        <begin position="227"/>
        <end position="247"/>
    </location>
</feature>
<feature type="topological domain" description="Cytoplasmic" evidence="3">
    <location>
        <begin position="248"/>
        <end position="252"/>
    </location>
</feature>
<feature type="transmembrane region" description="Helical" evidence="2">
    <location>
        <begin position="253"/>
        <end position="273"/>
    </location>
</feature>
<feature type="topological domain" description="Lumenal" evidence="1">
    <location>
        <begin position="274"/>
        <end position="311"/>
    </location>
</feature>
<feature type="modified residue" description="N-acetylalanine" evidence="1">
    <location>
        <position position="2"/>
    </location>
</feature>
<protein>
    <recommendedName>
        <fullName>Protein YIPF2</fullName>
    </recommendedName>
    <alternativeName>
        <fullName>YIP1 family member 2</fullName>
    </alternativeName>
</protein>
<sequence>MAAADDLAFHEFEEAANLLAETPDAATTSQSDKLTSQEHVAVVVGSGIGYGAEGEEEDDKTSLLQDEKPQPRFWTFDYYQSFFDVDTSQVLDRIKGSLLPHPGHNFVRHHLRNRPDLYGPFWICATLAFVLAVTGNLTLVLAQRRDPSIHYSPQFHKVTIAGITIYCYAWLVPLALWGFLRWRQGTRERMGLYTFLETVCVYGYSLFVFIPTVVLWLIPVQWLQWLFGALALALSAAGLVFTLWPVVREDTRLVAAALLSIVVLLHALLALGCKLYFFQPLPLDHVVPAPQAIPPSPNVLLPSSVQPMTTF</sequence>
<comment type="subunit">
    <text evidence="1">Interacts with YIPF6; this interaction may stabilize YIPF2. May also form a ternary complex with YIPF1 and YIPF6.</text>
</comment>
<comment type="subcellular location">
    <subcellularLocation>
        <location evidence="1">Golgi apparatus</location>
        <location evidence="1">cis-Golgi network membrane</location>
        <topology evidence="1">Multi-pass membrane protein</topology>
    </subcellularLocation>
    <subcellularLocation>
        <location evidence="1">Golgi apparatus</location>
        <location evidence="1">trans-Golgi network membrane</location>
    </subcellularLocation>
    <subcellularLocation>
        <location evidence="1">Late endosome membrane</location>
    </subcellularLocation>
    <text evidence="1">Mainly localizes within medial-/trans-Golgi and trans-Golgi network (TGN), while less so within cis-Golgi.</text>
</comment>
<comment type="similarity">
    <text evidence="3">Belongs to the YIP1 family.</text>
</comment>
<organism>
    <name type="scientific">Rattus norvegicus</name>
    <name type="common">Rat</name>
    <dbReference type="NCBI Taxonomy" id="10116"/>
    <lineage>
        <taxon>Eukaryota</taxon>
        <taxon>Metazoa</taxon>
        <taxon>Chordata</taxon>
        <taxon>Craniata</taxon>
        <taxon>Vertebrata</taxon>
        <taxon>Euteleostomi</taxon>
        <taxon>Mammalia</taxon>
        <taxon>Eutheria</taxon>
        <taxon>Euarchontoglires</taxon>
        <taxon>Glires</taxon>
        <taxon>Rodentia</taxon>
        <taxon>Myomorpha</taxon>
        <taxon>Muroidea</taxon>
        <taxon>Muridae</taxon>
        <taxon>Murinae</taxon>
        <taxon>Rattus</taxon>
    </lineage>
</organism>
<gene>
    <name type="primary">Yipf2</name>
</gene>
<name>YIPF2_RAT</name>
<evidence type="ECO:0000250" key="1">
    <source>
        <dbReference type="UniProtKB" id="Q9BWQ6"/>
    </source>
</evidence>
<evidence type="ECO:0000255" key="2"/>
<evidence type="ECO:0000305" key="3"/>